<reference key="1">
    <citation type="journal article" date="1990" name="EMBO J.">
        <title>Cloning and expression of a human voltage-gated potassium channel. A novel member of the RCK potassium channel family.</title>
        <authorList>
            <person name="Grupe A."/>
            <person name="Schroeter K.H."/>
            <person name="Ruppersberg J.P."/>
            <person name="Stocker M."/>
            <person name="Drewes T."/>
            <person name="Beckh S."/>
            <person name="Pongs O."/>
        </authorList>
    </citation>
    <scope>NUCLEOTIDE SEQUENCE [MRNA]</scope>
    <source>
        <tissue>Brain cortex</tissue>
    </source>
</reference>
<reference key="2">
    <citation type="journal article" date="1990" name="Neuron">
        <title>Cloning and expression of cDNA and genomic clones encoding three delayed rectifier potassium channels in rat brain.</title>
        <authorList>
            <person name="Swanson R."/>
            <person name="Marshall J."/>
            <person name="Smith J."/>
            <person name="Williams J."/>
            <person name="Boyle M.B."/>
            <person name="Folander K."/>
            <person name="Luneau C.J."/>
            <person name="Antanavage J."/>
            <person name="Oliva C."/>
            <person name="Buhrow S.A."/>
            <person name="Bennett C."/>
            <person name="Stein R.B."/>
            <person name="Kaczmarek L.M."/>
        </authorList>
    </citation>
    <scope>NUCLEOTIDE SEQUENCE [GENOMIC DNA]</scope>
    <source>
        <tissue>Brain</tissue>
    </source>
</reference>
<reference key="3">
    <citation type="journal article" date="1991" name="FEBS Lett.">
        <title>Electrophysiological characterization of a new member of the RCK family of rat brain K+ channels.</title>
        <authorList>
            <person name="Kirsch G.E."/>
            <person name="Drewe J.A."/>
            <person name="Verma S."/>
            <person name="Brown A.M."/>
            <person name="Joho R.H."/>
        </authorList>
    </citation>
    <scope>NUCLEOTIDE SEQUENCE [MRNA]</scope>
    <scope>FUNCTION</scope>
    <scope>SUBCELLULAR LOCATION</scope>
    <scope>TRANSPORTER ACTIVITY</scope>
    <source>
        <tissue>Brain</tissue>
    </source>
</reference>
<reference key="4">
    <citation type="journal article" date="1997" name="J. Neurosci.">
        <title>Association and colocalization of the Kvbeta1 and Kvbeta2 beta-subunits with Kv1 alpha-subunits in mammalian brain K+ channel complexes.</title>
        <authorList>
            <person name="Rhodes K.J."/>
            <person name="Strassle B.W."/>
            <person name="Monaghan M.M."/>
            <person name="Bekele-Arcuri Z."/>
            <person name="Matos M.F."/>
            <person name="Trimmer J.S."/>
        </authorList>
    </citation>
    <scope>INTERACTION WITH KCNAB1 AND KCNAB2</scope>
</reference>
<reference key="5">
    <citation type="journal article" date="2005" name="Circ. Res.">
        <title>Heteromultimeric Kv1 channels contribute to myogenic control of arterial diameter.</title>
        <authorList>
            <person name="Plane F."/>
            <person name="Johnson R."/>
            <person name="Kerr P."/>
            <person name="Wiehler W."/>
            <person name="Thorneloe K."/>
            <person name="Ishii K."/>
            <person name="Chen T."/>
            <person name="Cole W."/>
        </authorList>
    </citation>
    <scope>FUNCTION</scope>
    <scope>SUBCELLULAR LOCATION</scope>
    <scope>TRANSPORTER ACTIVITY</scope>
</reference>
<protein>
    <recommendedName>
        <fullName>Potassium voltage-gated channel subfamily A member 6</fullName>
    </recommendedName>
    <alternativeName>
        <fullName>RCK2</fullName>
    </alternativeName>
    <alternativeName>
        <fullName>Voltage-gated potassium channel subunit Kv1.6</fullName>
    </alternativeName>
    <alternativeName>
        <fullName>Voltage-gated potassium channel subunit Kv2</fullName>
    </alternativeName>
</protein>
<comment type="function">
    <text evidence="5 6 8">Voltage-gated potassium channel that mediates transmembrane potassium transport in excitable membranes. Forms tetrameric potassium-selective channels through which potassium ions pass in accordance with their electrochemical gradient. The channel alternates between opened and closed conformations in response to the voltage difference across the membrane. Can form functional homotetrameric channels and heterotetrameric channels that contain variable proportions of KCNA1, KCNA2, KCNA4, KNCA5, KCNA6, and possibly other family members as well; channel properties depend on the type of alpha subunits that are part of the channel (PubMed:15618540, PubMed:1993474). Channel properties are modulated by cytoplasmic beta subunits that regulate the subcellular location of the alpha subunits and promote rapid inactivation (Probable). Homotetrameric channels display rapid activation and slow inactivation (PubMed:1993474).</text>
</comment>
<comment type="catalytic activity">
    <reaction evidence="5 6">
        <text>K(+)(in) = K(+)(out)</text>
        <dbReference type="Rhea" id="RHEA:29463"/>
        <dbReference type="ChEBI" id="CHEBI:29103"/>
    </reaction>
</comment>
<comment type="subunit">
    <text evidence="7 8">Homotetramer and heterotetramer of potassium channel proteins (Probable). Interacts with KCNAB1 and KCNAB2 (PubMed:9334400).</text>
</comment>
<comment type="subcellular location">
    <subcellularLocation>
        <location evidence="6">Cell membrane</location>
        <topology evidence="8">Multi-pass membrane protein</topology>
    </subcellularLocation>
</comment>
<comment type="domain">
    <text>The N-terminus may be important in determining the rate of inactivation of the channel while the tail may play a role in modulation of channel activity and/or targeting of the channel to specific subcellular compartments.</text>
</comment>
<comment type="domain">
    <text evidence="1">The transmembrane segment S4 functions as a voltage-sensor and is characterized by a series of positively charged amino acids at every third position. Channel opening and closing is effected by a conformation change that affects the position and orientation of the voltage-sensor paddle formed by S3 and S4 within the membrane. A transmembrane electric field that is positive inside would push the positively charged S4 segment outwards, thereby opening the pore, while a field that is negative inside would pull the S4 segment inwards and close the pore. Changes in the position and orientation of S4 are then transmitted to the activation gate formed by the inner helix bundle via the S4-S5 linker region.</text>
</comment>
<comment type="similarity">
    <text evidence="8">Belongs to the potassium channel family. A (Shaker) (TC 1.A.1.2) subfamily. Kv1.6/KCNA6 sub-subfamily.</text>
</comment>
<accession>P17659</accession>
<accession>P19025</accession>
<gene>
    <name type="primary">Kcna6</name>
</gene>
<organism>
    <name type="scientific">Rattus norvegicus</name>
    <name type="common">Rat</name>
    <dbReference type="NCBI Taxonomy" id="10116"/>
    <lineage>
        <taxon>Eukaryota</taxon>
        <taxon>Metazoa</taxon>
        <taxon>Chordata</taxon>
        <taxon>Craniata</taxon>
        <taxon>Vertebrata</taxon>
        <taxon>Euteleostomi</taxon>
        <taxon>Mammalia</taxon>
        <taxon>Eutheria</taxon>
        <taxon>Euarchontoglires</taxon>
        <taxon>Glires</taxon>
        <taxon>Rodentia</taxon>
        <taxon>Myomorpha</taxon>
        <taxon>Muroidea</taxon>
        <taxon>Muridae</taxon>
        <taxon>Murinae</taxon>
        <taxon>Rattus</taxon>
    </lineage>
</organism>
<feature type="chain" id="PRO_0000053992" description="Potassium voltage-gated channel subfamily A member 6">
    <location>
        <begin position="1"/>
        <end position="530"/>
    </location>
</feature>
<feature type="transmembrane region" description="Helical; Name=Segment S1" evidence="1">
    <location>
        <begin position="172"/>
        <end position="193"/>
    </location>
</feature>
<feature type="transmembrane region" description="Helical; Name=Segment S2" evidence="1">
    <location>
        <begin position="264"/>
        <end position="285"/>
    </location>
</feature>
<feature type="transmembrane region" description="Helical; Name=Segment S3" evidence="1">
    <location>
        <begin position="297"/>
        <end position="317"/>
    </location>
</feature>
<feature type="transmembrane region" description="Helical; Voltage-sensor; Name=Segment S4" evidence="1">
    <location>
        <begin position="339"/>
        <end position="359"/>
    </location>
</feature>
<feature type="transmembrane region" description="Helical; Name=Segment S5" evidence="1">
    <location>
        <begin position="375"/>
        <end position="396"/>
    </location>
</feature>
<feature type="intramembrane region" description="Helical; Name=Pore helix" evidence="1">
    <location>
        <begin position="411"/>
        <end position="422"/>
    </location>
</feature>
<feature type="intramembrane region" evidence="1">
    <location>
        <begin position="423"/>
        <end position="430"/>
    </location>
</feature>
<feature type="transmembrane region" description="Helical; Name=Segment S6" evidence="1">
    <location>
        <begin position="438"/>
        <end position="466"/>
    </location>
</feature>
<feature type="region of interest" description="Disordered" evidence="4">
    <location>
        <begin position="1"/>
        <end position="35"/>
    </location>
</feature>
<feature type="region of interest" description="Disordered" evidence="4">
    <location>
        <begin position="203"/>
        <end position="239"/>
    </location>
</feature>
<feature type="region of interest" description="S4-S5 linker" evidence="1">
    <location>
        <begin position="361"/>
        <end position="374"/>
    </location>
</feature>
<feature type="short sequence motif" description="Selectivity filter" evidence="1">
    <location>
        <begin position="423"/>
        <end position="428"/>
    </location>
</feature>
<feature type="short sequence motif" description="PDZ-binding" evidence="3">
    <location>
        <begin position="527"/>
        <end position="529"/>
    </location>
</feature>
<feature type="compositionally biased region" description="Acidic residues" evidence="4">
    <location>
        <begin position="21"/>
        <end position="30"/>
    </location>
</feature>
<feature type="modified residue" description="Phosphoserine" evidence="2">
    <location>
        <position position="3"/>
    </location>
</feature>
<feature type="modified residue" description="Phosphoserine; by CK2" evidence="3">
    <location>
        <position position="222"/>
    </location>
</feature>
<feature type="modified residue" description="Phosphoserine; by PKA" evidence="8">
    <location>
        <position position="512"/>
    </location>
</feature>
<feature type="modified residue" description="Phosphothreonine; by PKA" evidence="3">
    <location>
        <position position="528"/>
    </location>
</feature>
<feature type="lipid moiety-binding region" description="S-palmitoyl cysteine" evidence="3">
    <location>
        <position position="286"/>
    </location>
</feature>
<feature type="sequence conflict" description="In Ref. 3; no nucleotide entry." evidence="8" ref="3">
    <original>S</original>
    <variation>L</variation>
    <location>
        <position position="241"/>
    </location>
</feature>
<feature type="sequence conflict" description="In Ref. 2; AAA41499." evidence="8" ref="2">
    <original>R</original>
    <variation>G</variation>
    <location>
        <position position="333"/>
    </location>
</feature>
<keyword id="KW-1003">Cell membrane</keyword>
<keyword id="KW-0407">Ion channel</keyword>
<keyword id="KW-0406">Ion transport</keyword>
<keyword id="KW-0449">Lipoprotein</keyword>
<keyword id="KW-0472">Membrane</keyword>
<keyword id="KW-0564">Palmitate</keyword>
<keyword id="KW-0597">Phosphoprotein</keyword>
<keyword id="KW-0630">Potassium</keyword>
<keyword id="KW-0631">Potassium channel</keyword>
<keyword id="KW-0633">Potassium transport</keyword>
<keyword id="KW-1185">Reference proteome</keyword>
<keyword id="KW-0812">Transmembrane</keyword>
<keyword id="KW-1133">Transmembrane helix</keyword>
<keyword id="KW-0813">Transport</keyword>
<keyword id="KW-0851">Voltage-gated channel</keyword>
<name>KCNA6_RAT</name>
<proteinExistence type="evidence at protein level"/>
<dbReference type="EMBL" id="X17621">
    <property type="protein sequence ID" value="CAA35622.1"/>
    <property type="molecule type" value="mRNA"/>
</dbReference>
<dbReference type="EMBL" id="M27159">
    <property type="protein sequence ID" value="AAA41499.1"/>
    <property type="status" value="ALT_SEQ"/>
    <property type="molecule type" value="Genomic_DNA"/>
</dbReference>
<dbReference type="PIR" id="JH0167">
    <property type="entry name" value="JH0167"/>
</dbReference>
<dbReference type="SMR" id="P17659"/>
<dbReference type="CORUM" id="P17659"/>
<dbReference type="FunCoup" id="P17659">
    <property type="interactions" value="391"/>
</dbReference>
<dbReference type="STRING" id="10116.ENSRNOP00000071895"/>
<dbReference type="BindingDB" id="P17659"/>
<dbReference type="ChEMBL" id="CHEMBL4105906"/>
<dbReference type="GuidetoPHARMACOLOGY" id="543"/>
<dbReference type="GlyGen" id="P17659">
    <property type="glycosylation" value="1 site"/>
</dbReference>
<dbReference type="iPTMnet" id="P17659"/>
<dbReference type="PhosphoSitePlus" id="P17659"/>
<dbReference type="PaxDb" id="10116-ENSRNOP00000067348"/>
<dbReference type="ABCD" id="P17659">
    <property type="antibodies" value="1 sequenced antibody"/>
</dbReference>
<dbReference type="UCSC" id="RGD:62083">
    <property type="organism name" value="rat"/>
</dbReference>
<dbReference type="AGR" id="RGD:62083"/>
<dbReference type="RGD" id="62083">
    <property type="gene designation" value="Kcna6"/>
</dbReference>
<dbReference type="eggNOG" id="KOG1545">
    <property type="taxonomic scope" value="Eukaryota"/>
</dbReference>
<dbReference type="InParanoid" id="P17659"/>
<dbReference type="PhylomeDB" id="P17659"/>
<dbReference type="Reactome" id="R-RNO-1296072">
    <property type="pathway name" value="Voltage gated Potassium channels"/>
</dbReference>
<dbReference type="PRO" id="PR:P17659"/>
<dbReference type="Proteomes" id="UP000002494">
    <property type="component" value="Unplaced"/>
</dbReference>
<dbReference type="GO" id="GO:0030424">
    <property type="term" value="C:axon"/>
    <property type="evidence" value="ECO:0000266"/>
    <property type="project" value="RGD"/>
</dbReference>
<dbReference type="GO" id="GO:0043679">
    <property type="term" value="C:axon terminus"/>
    <property type="evidence" value="ECO:0000266"/>
    <property type="project" value="RGD"/>
</dbReference>
<dbReference type="GO" id="GO:0016020">
    <property type="term" value="C:membrane"/>
    <property type="evidence" value="ECO:0000318"/>
    <property type="project" value="GO_Central"/>
</dbReference>
<dbReference type="GO" id="GO:0005886">
    <property type="term" value="C:plasma membrane"/>
    <property type="evidence" value="ECO:0000315"/>
    <property type="project" value="UniProtKB"/>
</dbReference>
<dbReference type="GO" id="GO:0034705">
    <property type="term" value="C:potassium channel complex"/>
    <property type="evidence" value="ECO:0000314"/>
    <property type="project" value="UniProtKB"/>
</dbReference>
<dbReference type="GO" id="GO:0008076">
    <property type="term" value="C:voltage-gated potassium channel complex"/>
    <property type="evidence" value="ECO:0000314"/>
    <property type="project" value="UniProtKB"/>
</dbReference>
<dbReference type="GO" id="GO:0005251">
    <property type="term" value="F:delayed rectifier potassium channel activity"/>
    <property type="evidence" value="ECO:0000314"/>
    <property type="project" value="UniProtKB"/>
</dbReference>
<dbReference type="GO" id="GO:0005249">
    <property type="term" value="F:voltage-gated potassium channel activity"/>
    <property type="evidence" value="ECO:0000314"/>
    <property type="project" value="UniProtKB"/>
</dbReference>
<dbReference type="GO" id="GO:0001508">
    <property type="term" value="P:action potential"/>
    <property type="evidence" value="ECO:0000318"/>
    <property type="project" value="GO_Central"/>
</dbReference>
<dbReference type="GO" id="GO:0071805">
    <property type="term" value="P:potassium ion transmembrane transport"/>
    <property type="evidence" value="ECO:0000314"/>
    <property type="project" value="UniProtKB"/>
</dbReference>
<dbReference type="GO" id="GO:0051260">
    <property type="term" value="P:protein homooligomerization"/>
    <property type="evidence" value="ECO:0007669"/>
    <property type="project" value="InterPro"/>
</dbReference>
<dbReference type="CDD" id="cd18407">
    <property type="entry name" value="BTB_POZ_KCNA6"/>
    <property type="match status" value="1"/>
</dbReference>
<dbReference type="FunFam" id="1.10.287.70:FF:000002">
    <property type="entry name" value="Potassium voltage-gated channel subfamily a member"/>
    <property type="match status" value="1"/>
</dbReference>
<dbReference type="FunFam" id="3.30.710.10:FF:000012">
    <property type="entry name" value="Potassium voltage-gated channel subfamily A member 10"/>
    <property type="match status" value="1"/>
</dbReference>
<dbReference type="FunFam" id="1.20.120.350:FF:000025">
    <property type="entry name" value="Potassium voltage-gated channel subfamily A member 2"/>
    <property type="match status" value="1"/>
</dbReference>
<dbReference type="Gene3D" id="1.10.287.70">
    <property type="match status" value="1"/>
</dbReference>
<dbReference type="Gene3D" id="3.30.710.10">
    <property type="entry name" value="Potassium Channel Kv1.1, Chain A"/>
    <property type="match status" value="1"/>
</dbReference>
<dbReference type="Gene3D" id="1.20.120.350">
    <property type="entry name" value="Voltage-gated potassium channels. Chain C"/>
    <property type="match status" value="1"/>
</dbReference>
<dbReference type="InterPro" id="IPR000210">
    <property type="entry name" value="BTB/POZ_dom"/>
</dbReference>
<dbReference type="InterPro" id="IPR005821">
    <property type="entry name" value="Ion_trans_dom"/>
</dbReference>
<dbReference type="InterPro" id="IPR003968">
    <property type="entry name" value="K_chnl_volt-dep_Kv"/>
</dbReference>
<dbReference type="InterPro" id="IPR003972">
    <property type="entry name" value="K_chnl_volt-dep_Kv1"/>
</dbReference>
<dbReference type="InterPro" id="IPR004053">
    <property type="entry name" value="KCNA6"/>
</dbReference>
<dbReference type="InterPro" id="IPR046988">
    <property type="entry name" value="KCNA6_BTB_POZ"/>
</dbReference>
<dbReference type="InterPro" id="IPR011333">
    <property type="entry name" value="SKP1/BTB/POZ_sf"/>
</dbReference>
<dbReference type="InterPro" id="IPR003131">
    <property type="entry name" value="T1-type_BTB"/>
</dbReference>
<dbReference type="InterPro" id="IPR028325">
    <property type="entry name" value="VG_K_chnl"/>
</dbReference>
<dbReference type="InterPro" id="IPR027359">
    <property type="entry name" value="Volt_channel_dom_sf"/>
</dbReference>
<dbReference type="PANTHER" id="PTHR11537:SF104">
    <property type="entry name" value="POTASSIUM VOLTAGE-GATED CHANNEL SUBFAMILY A MEMBER 6"/>
    <property type="match status" value="1"/>
</dbReference>
<dbReference type="PANTHER" id="PTHR11537">
    <property type="entry name" value="VOLTAGE-GATED POTASSIUM CHANNEL"/>
    <property type="match status" value="1"/>
</dbReference>
<dbReference type="Pfam" id="PF02214">
    <property type="entry name" value="BTB_2"/>
    <property type="match status" value="1"/>
</dbReference>
<dbReference type="Pfam" id="PF00520">
    <property type="entry name" value="Ion_trans"/>
    <property type="match status" value="1"/>
</dbReference>
<dbReference type="PRINTS" id="PR00169">
    <property type="entry name" value="KCHANNEL"/>
</dbReference>
<dbReference type="PRINTS" id="PR01513">
    <property type="entry name" value="KV16CHANNEL"/>
</dbReference>
<dbReference type="PRINTS" id="PR01491">
    <property type="entry name" value="KVCHANNEL"/>
</dbReference>
<dbReference type="PRINTS" id="PR01496">
    <property type="entry name" value="SHAKERCHANEL"/>
</dbReference>
<dbReference type="SMART" id="SM00225">
    <property type="entry name" value="BTB"/>
    <property type="match status" value="1"/>
</dbReference>
<dbReference type="SUPFAM" id="SSF54695">
    <property type="entry name" value="POZ domain"/>
    <property type="match status" value="1"/>
</dbReference>
<dbReference type="SUPFAM" id="SSF81324">
    <property type="entry name" value="Voltage-gated potassium channels"/>
    <property type="match status" value="1"/>
</dbReference>
<evidence type="ECO:0000250" key="1">
    <source>
        <dbReference type="UniProtKB" id="P63142"/>
    </source>
</evidence>
<evidence type="ECO:0000250" key="2">
    <source>
        <dbReference type="UniProtKB" id="Q61923"/>
    </source>
</evidence>
<evidence type="ECO:0000255" key="3"/>
<evidence type="ECO:0000256" key="4">
    <source>
        <dbReference type="SAM" id="MobiDB-lite"/>
    </source>
</evidence>
<evidence type="ECO:0000269" key="5">
    <source>
    </source>
</evidence>
<evidence type="ECO:0000269" key="6">
    <source>
    </source>
</evidence>
<evidence type="ECO:0000269" key="7">
    <source>
    </source>
</evidence>
<evidence type="ECO:0000305" key="8"/>
<sequence length="530" mass="58884">MRSEKSLTLAAPGEVRGPEGEQQDAGEFQEAEGGGGCCSSERLVINISGLRYETQLRTLSLFPDTLLGDPGRRVRFFDPLRNEYFFDRNRPSFDAILYYYQSGGRLRRPVNVPLDIFMEEIRFYQLGDEALAAFREDEGCLPEGGEDEKPLPSQPFQRQVWLLFEYPESSGPARGIAIVSVLVILISIVIFCLETLPQFRADGRGGSNEGSGTRMSPASRGSHEEEDEDEDSYAFPGSIPSGGLGTGGTSSFSTLGGSFFTDPFFLVETLCIVWFTFELLVRFSACPSKAAFFRNIMNIIDLVAIFPYFITLGTELVQRHEQQPVSGGSGQNRQQAMSLAILRVIRLVRVFRIFKLSRHSKGLQILGKTLQASMRELGLLIFFLFIGVILFSSAVYFAEADDVDSLFPSIPDAFWWAVVTMTTVGYGDMYPMTVGGKIVGSLCAIAGVLTIALPVPVIVSNFNYFYHRETEQEEQGQYTHVTCGQPTPDLKATDNGLGKPDFAEASRERRSSYLPTPHRAYAEKRMLTEV</sequence>